<protein>
    <recommendedName>
        <fullName>Beta-glucosidase A</fullName>
        <ecNumber>3.2.1.21</ecNumber>
    </recommendedName>
    <alternativeName>
        <fullName>Beta-D-glucoside glucohydrolase</fullName>
    </alternativeName>
    <alternativeName>
        <fullName>Cellobiase</fullName>
    </alternativeName>
    <alternativeName>
        <fullName>Gentiobiase</fullName>
    </alternativeName>
</protein>
<proteinExistence type="inferred from homology"/>
<sequence>MEKWARIKYTPNLPLGENGERVTASQKHIELSCEAACEGMVLLKNDRNVLPIRKGTRVALFGKGVFDYVKGGGGSGDVTVPYIRNLYEGLSQYTSDISIYDKSVRFYQEYVADQYRLGIAPGMIKEPALPEDILADAAAYADTAIIAISRFSGEGWDRKVAGVDREIKCEAKDLVEQGNKIFDHGDFYLTNAEKKMVKMVKENFSSVIVVMNVGGVVDTTWFKKDDQISSVLMAWQGGIEGGLAAARILLGKVNPSGKLSDTFAARLEDYPSTEGFHEDDDYVDYTEDIYVGYRYFETIPGAKEKVNYPFGYGLSYTTFLLEDYKAEPFVASAADEVGKSDSDLADAIVASVTVTNIGKIPGKEVVQLYYSAPQGKLGKPAKVLGGYAKTRLLQPGESQRVTIALYMEDMASYDDLGKVKKAAWLLEKGEYHFFLGTSVRDTRLLDYTYELSKNIIVEQVSNKLVPTSLPKRMLADGTYEELPQTEPVDTYATIFPRPKNWKETIEHDVLKTPVVRPQDRFQLFLPPKEGDPKKFIEVAECKVTLEDFIAQLSNEQLASLLGGQPNVGMANTFGYGNLPEVGVPNAQTCDGPAGVRIAPEVGVVTTAFPCSTLLACTWNEDICYEVGVAGGEEAKECNFGAWLTPAVNIHRSPLCGRNFEYYSEDPFLAGKQAAAMVRGIQSNNIIATPKHFALNNKESNRKGSDSRASERAIREIYLKAFEIIVKEQSPGASCLQYNIVNGQRSSESHDLLTGILRDEWGFEGVVVSDWWGFGEHYKEVLAGNDIKMGCGYTEQLLEAIDKKALKRKDLEKRQSESSRCFSNSTKLKAA</sequence>
<reference key="1">
    <citation type="journal article" date="1990" name="J. Gen. Microbiol.">
        <title>Cloning, sequencing and analysis of expression of a Butyrivibrio fibrisolvens gene encoding a beta-glucosidase.</title>
        <authorList>
            <person name="Lin L.L."/>
            <person name="Rumbak E."/>
            <person name="Zappe H."/>
            <person name="Thompson J.A."/>
            <person name="Woods D.R."/>
        </authorList>
    </citation>
    <scope>NUCLEOTIDE SEQUENCE [GENOMIC DNA]</scope>
    <source>
        <strain>H17C</strain>
    </source>
</reference>
<name>BGLS_BUTFI</name>
<organism>
    <name type="scientific">Butyrivibrio fibrisolvens</name>
    <dbReference type="NCBI Taxonomy" id="831"/>
    <lineage>
        <taxon>Bacteria</taxon>
        <taxon>Bacillati</taxon>
        <taxon>Bacillota</taxon>
        <taxon>Clostridia</taxon>
        <taxon>Lachnospirales</taxon>
        <taxon>Lachnospiraceae</taxon>
        <taxon>Butyrivibrio</taxon>
    </lineage>
</organism>
<keyword id="KW-0119">Carbohydrate metabolism</keyword>
<keyword id="KW-0136">Cellulose degradation</keyword>
<keyword id="KW-0326">Glycosidase</keyword>
<keyword id="KW-0378">Hydrolase</keyword>
<keyword id="KW-0624">Polysaccharide degradation</keyword>
<gene>
    <name type="primary">bglA</name>
</gene>
<dbReference type="EC" id="3.2.1.21"/>
<dbReference type="EMBL" id="M31120">
    <property type="protein sequence ID" value="AAA23008.1"/>
    <property type="molecule type" value="Genomic_DNA"/>
</dbReference>
<dbReference type="PIR" id="A44768">
    <property type="entry name" value="A44768"/>
</dbReference>
<dbReference type="SMR" id="P16084"/>
<dbReference type="CAZy" id="GH3">
    <property type="family name" value="Glycoside Hydrolase Family 3"/>
</dbReference>
<dbReference type="GO" id="GO:0008422">
    <property type="term" value="F:beta-glucosidase activity"/>
    <property type="evidence" value="ECO:0007669"/>
    <property type="project" value="UniProtKB-EC"/>
</dbReference>
<dbReference type="GO" id="GO:0030245">
    <property type="term" value="P:cellulose catabolic process"/>
    <property type="evidence" value="ECO:0007669"/>
    <property type="project" value="UniProtKB-KW"/>
</dbReference>
<dbReference type="Gene3D" id="3.40.50.1700">
    <property type="entry name" value="Glycoside hydrolase family 3 C-terminal domain"/>
    <property type="match status" value="1"/>
</dbReference>
<dbReference type="Gene3D" id="3.20.20.300">
    <property type="entry name" value="Glycoside hydrolase, family 3, N-terminal domain"/>
    <property type="match status" value="1"/>
</dbReference>
<dbReference type="Gene3D" id="2.60.40.10">
    <property type="entry name" value="Immunoglobulins"/>
    <property type="match status" value="1"/>
</dbReference>
<dbReference type="InterPro" id="IPR050288">
    <property type="entry name" value="Cellulose_deg_GH3"/>
</dbReference>
<dbReference type="InterPro" id="IPR026891">
    <property type="entry name" value="Fn3-like"/>
</dbReference>
<dbReference type="InterPro" id="IPR019800">
    <property type="entry name" value="Glyco_hydro_3_AS"/>
</dbReference>
<dbReference type="InterPro" id="IPR002772">
    <property type="entry name" value="Glyco_hydro_3_C"/>
</dbReference>
<dbReference type="InterPro" id="IPR036881">
    <property type="entry name" value="Glyco_hydro_3_C_sf"/>
</dbReference>
<dbReference type="InterPro" id="IPR001764">
    <property type="entry name" value="Glyco_hydro_3_N"/>
</dbReference>
<dbReference type="InterPro" id="IPR036962">
    <property type="entry name" value="Glyco_hydro_3_N_sf"/>
</dbReference>
<dbReference type="InterPro" id="IPR017853">
    <property type="entry name" value="Glycoside_hydrolase_SF"/>
</dbReference>
<dbReference type="InterPro" id="IPR013783">
    <property type="entry name" value="Ig-like_fold"/>
</dbReference>
<dbReference type="PANTHER" id="PTHR42715">
    <property type="entry name" value="BETA-GLUCOSIDASE"/>
    <property type="match status" value="1"/>
</dbReference>
<dbReference type="PANTHER" id="PTHR42715:SF10">
    <property type="entry name" value="BETA-GLUCOSIDASE"/>
    <property type="match status" value="1"/>
</dbReference>
<dbReference type="Pfam" id="PF14310">
    <property type="entry name" value="Fn3-like"/>
    <property type="match status" value="1"/>
</dbReference>
<dbReference type="Pfam" id="PF00933">
    <property type="entry name" value="Glyco_hydro_3"/>
    <property type="match status" value="1"/>
</dbReference>
<dbReference type="Pfam" id="PF01915">
    <property type="entry name" value="Glyco_hydro_3_C"/>
    <property type="match status" value="1"/>
</dbReference>
<dbReference type="PRINTS" id="PR00133">
    <property type="entry name" value="GLHYDRLASE3"/>
</dbReference>
<dbReference type="SMART" id="SM01217">
    <property type="entry name" value="Fn3_like"/>
    <property type="match status" value="1"/>
</dbReference>
<dbReference type="SUPFAM" id="SSF51445">
    <property type="entry name" value="(Trans)glycosidases"/>
    <property type="match status" value="1"/>
</dbReference>
<dbReference type="SUPFAM" id="SSF52279">
    <property type="entry name" value="Beta-D-glucan exohydrolase, C-terminal domain"/>
    <property type="match status" value="1"/>
</dbReference>
<dbReference type="PROSITE" id="PS00775">
    <property type="entry name" value="GLYCOSYL_HYDROL_F3"/>
    <property type="match status" value="1"/>
</dbReference>
<feature type="chain" id="PRO_0000210777" description="Beta-glucosidase A">
    <location>
        <begin position="1"/>
        <end position="830"/>
    </location>
</feature>
<feature type="active site" evidence="1">
    <location>
        <position position="769"/>
    </location>
</feature>
<accession>P16084</accession>
<evidence type="ECO:0000250" key="1"/>
<evidence type="ECO:0000305" key="2"/>
<comment type="function">
    <text>B.fibrisolvens beta-glucosidase hydrolyzes cellobiose to a limited extent, cellotriose to cellobiose and glucose, and cellotetraose and cellopentaose to predominantly glucose.</text>
</comment>
<comment type="catalytic activity">
    <reaction>
        <text>Hydrolysis of terminal, non-reducing beta-D-glucosyl residues with release of beta-D-glucose.</text>
        <dbReference type="EC" id="3.2.1.21"/>
    </reaction>
</comment>
<comment type="similarity">
    <text evidence="2">Belongs to the glycosyl hydrolase 3 family.</text>
</comment>